<evidence type="ECO:0000255" key="1"/>
<evidence type="ECO:0000269" key="2">
    <source>
    </source>
</evidence>
<comment type="subcellular location">
    <subcellularLocation>
        <location evidence="2">Membrane</location>
    </subcellularLocation>
</comment>
<accession>Q9US39</accession>
<accession>Q9UTW2</accession>
<dbReference type="EMBL" id="CU329670">
    <property type="protein sequence ID" value="CAB63538.1"/>
    <property type="molecule type" value="Genomic_DNA"/>
</dbReference>
<dbReference type="EMBL" id="AB027962">
    <property type="protein sequence ID" value="BAA87266.1"/>
    <property type="status" value="ALT_SEQ"/>
    <property type="molecule type" value="Genomic_DNA"/>
</dbReference>
<dbReference type="PIR" id="T50052">
    <property type="entry name" value="T50052"/>
</dbReference>
<dbReference type="RefSeq" id="NP_594993.1">
    <property type="nucleotide sequence ID" value="NM_001020424.2"/>
</dbReference>
<dbReference type="SMR" id="Q9US39"/>
<dbReference type="BioGRID" id="279460">
    <property type="interactions" value="14"/>
</dbReference>
<dbReference type="FunCoup" id="Q9US39">
    <property type="interactions" value="293"/>
</dbReference>
<dbReference type="STRING" id="284812.Q9US39"/>
<dbReference type="iPTMnet" id="Q9US39"/>
<dbReference type="PaxDb" id="4896-SPAC1039.02.1"/>
<dbReference type="EnsemblFungi" id="SPAC1039.02.1">
    <property type="protein sequence ID" value="SPAC1039.02.1:pep"/>
    <property type="gene ID" value="SPAC1039.02"/>
</dbReference>
<dbReference type="KEGG" id="spo:2543024"/>
<dbReference type="PomBase" id="SPAC1039.02"/>
<dbReference type="VEuPathDB" id="FungiDB:SPAC1039.02"/>
<dbReference type="eggNOG" id="KOG4419">
    <property type="taxonomic scope" value="Eukaryota"/>
</dbReference>
<dbReference type="HOGENOM" id="CLU_019028_0_0_1"/>
<dbReference type="InParanoid" id="Q9US39"/>
<dbReference type="OMA" id="QTIGNHE"/>
<dbReference type="PhylomeDB" id="Q9US39"/>
<dbReference type="PRO" id="PR:Q9US39"/>
<dbReference type="Proteomes" id="UP000002485">
    <property type="component" value="Chromosome I"/>
</dbReference>
<dbReference type="GO" id="GO:0009986">
    <property type="term" value="C:cell surface"/>
    <property type="evidence" value="ECO:0000250"/>
    <property type="project" value="PomBase"/>
</dbReference>
<dbReference type="GO" id="GO:0005829">
    <property type="term" value="C:cytosol"/>
    <property type="evidence" value="ECO:0000318"/>
    <property type="project" value="GO_Central"/>
</dbReference>
<dbReference type="GO" id="GO:0005576">
    <property type="term" value="C:extracellular region"/>
    <property type="evidence" value="ECO:0000314"/>
    <property type="project" value="PomBase"/>
</dbReference>
<dbReference type="GO" id="GO:0016020">
    <property type="term" value="C:membrane"/>
    <property type="evidence" value="ECO:0007669"/>
    <property type="project" value="UniProtKB-SubCell"/>
</dbReference>
<dbReference type="GO" id="GO:0008253">
    <property type="term" value="F:5'-nucleotidase activity"/>
    <property type="evidence" value="ECO:0000269"/>
    <property type="project" value="PomBase"/>
</dbReference>
<dbReference type="GO" id="GO:0006154">
    <property type="term" value="P:adenosine catabolic process"/>
    <property type="evidence" value="ECO:0000250"/>
    <property type="project" value="PomBase"/>
</dbReference>
<dbReference type="GO" id="GO:0009166">
    <property type="term" value="P:nucleotide catabolic process"/>
    <property type="evidence" value="ECO:0007669"/>
    <property type="project" value="InterPro"/>
</dbReference>
<dbReference type="CDD" id="cd07407">
    <property type="entry name" value="MPP_YHR202W_N"/>
    <property type="match status" value="1"/>
</dbReference>
<dbReference type="FunFam" id="3.60.21.10:FF:000043">
    <property type="entry name" value="Ser/Thr protein phosphatase family"/>
    <property type="match status" value="1"/>
</dbReference>
<dbReference type="Gene3D" id="3.60.21.10">
    <property type="match status" value="1"/>
</dbReference>
<dbReference type="Gene3D" id="3.90.780.10">
    <property type="entry name" value="5'-Nucleotidase, C-terminal domain"/>
    <property type="match status" value="1"/>
</dbReference>
<dbReference type="InterPro" id="IPR036907">
    <property type="entry name" value="5'-Nucleotdase_C_sf"/>
</dbReference>
<dbReference type="InterPro" id="IPR006179">
    <property type="entry name" value="5_nucleotidase/apyrase"/>
</dbReference>
<dbReference type="InterPro" id="IPR004843">
    <property type="entry name" value="Calcineurin-like_PHP_ApaH"/>
</dbReference>
<dbReference type="InterPro" id="IPR029052">
    <property type="entry name" value="Metallo-depent_PP-like"/>
</dbReference>
<dbReference type="InterPro" id="IPR053828">
    <property type="entry name" value="Nucleosidase_C"/>
</dbReference>
<dbReference type="InterPro" id="IPR014485">
    <property type="entry name" value="Pesterase_C1039"/>
</dbReference>
<dbReference type="InterPro" id="IPR041823">
    <property type="entry name" value="YHR202W_N"/>
</dbReference>
<dbReference type="PANTHER" id="PTHR11575">
    <property type="entry name" value="5'-NUCLEOTIDASE-RELATED"/>
    <property type="match status" value="1"/>
</dbReference>
<dbReference type="PANTHER" id="PTHR11575:SF49">
    <property type="entry name" value="PHOSPHOPROTEIN PHOSPHATASE"/>
    <property type="match status" value="1"/>
</dbReference>
<dbReference type="Pfam" id="PF00149">
    <property type="entry name" value="Metallophos"/>
    <property type="match status" value="1"/>
</dbReference>
<dbReference type="Pfam" id="PF21953">
    <property type="entry name" value="NadN_nucleosid_C"/>
    <property type="match status" value="2"/>
</dbReference>
<dbReference type="PIRSF" id="PIRSF017316">
    <property type="entry name" value="Pesterase_C1039"/>
    <property type="match status" value="1"/>
</dbReference>
<dbReference type="SUPFAM" id="SSF55816">
    <property type="entry name" value="5'-nucleotidase (syn. UDP-sugar hydrolase), C-terminal domain"/>
    <property type="match status" value="1"/>
</dbReference>
<dbReference type="SUPFAM" id="SSF56300">
    <property type="entry name" value="Metallo-dependent phosphatases"/>
    <property type="match status" value="1"/>
</dbReference>
<reference key="1">
    <citation type="journal article" date="2002" name="Nature">
        <title>The genome sequence of Schizosaccharomyces pombe.</title>
        <authorList>
            <person name="Wood V."/>
            <person name="Gwilliam R."/>
            <person name="Rajandream M.A."/>
            <person name="Lyne M.H."/>
            <person name="Lyne R."/>
            <person name="Stewart A."/>
            <person name="Sgouros J.G."/>
            <person name="Peat N."/>
            <person name="Hayles J."/>
            <person name="Baker S.G."/>
            <person name="Basham D."/>
            <person name="Bowman S."/>
            <person name="Brooks K."/>
            <person name="Brown D."/>
            <person name="Brown S."/>
            <person name="Chillingworth T."/>
            <person name="Churcher C.M."/>
            <person name="Collins M."/>
            <person name="Connor R."/>
            <person name="Cronin A."/>
            <person name="Davis P."/>
            <person name="Feltwell T."/>
            <person name="Fraser A."/>
            <person name="Gentles S."/>
            <person name="Goble A."/>
            <person name="Hamlin N."/>
            <person name="Harris D.E."/>
            <person name="Hidalgo J."/>
            <person name="Hodgson G."/>
            <person name="Holroyd S."/>
            <person name="Hornsby T."/>
            <person name="Howarth S."/>
            <person name="Huckle E.J."/>
            <person name="Hunt S."/>
            <person name="Jagels K."/>
            <person name="James K.D."/>
            <person name="Jones L."/>
            <person name="Jones M."/>
            <person name="Leather S."/>
            <person name="McDonald S."/>
            <person name="McLean J."/>
            <person name="Mooney P."/>
            <person name="Moule S."/>
            <person name="Mungall K.L."/>
            <person name="Murphy L.D."/>
            <person name="Niblett D."/>
            <person name="Odell C."/>
            <person name="Oliver K."/>
            <person name="O'Neil S."/>
            <person name="Pearson D."/>
            <person name="Quail M.A."/>
            <person name="Rabbinowitsch E."/>
            <person name="Rutherford K.M."/>
            <person name="Rutter S."/>
            <person name="Saunders D."/>
            <person name="Seeger K."/>
            <person name="Sharp S."/>
            <person name="Skelton J."/>
            <person name="Simmonds M.N."/>
            <person name="Squares R."/>
            <person name="Squares S."/>
            <person name="Stevens K."/>
            <person name="Taylor K."/>
            <person name="Taylor R.G."/>
            <person name="Tivey A."/>
            <person name="Walsh S.V."/>
            <person name="Warren T."/>
            <person name="Whitehead S."/>
            <person name="Woodward J.R."/>
            <person name="Volckaert G."/>
            <person name="Aert R."/>
            <person name="Robben J."/>
            <person name="Grymonprez B."/>
            <person name="Weltjens I."/>
            <person name="Vanstreels E."/>
            <person name="Rieger M."/>
            <person name="Schaefer M."/>
            <person name="Mueller-Auer S."/>
            <person name="Gabel C."/>
            <person name="Fuchs M."/>
            <person name="Duesterhoeft A."/>
            <person name="Fritzc C."/>
            <person name="Holzer E."/>
            <person name="Moestl D."/>
            <person name="Hilbert H."/>
            <person name="Borzym K."/>
            <person name="Langer I."/>
            <person name="Beck A."/>
            <person name="Lehrach H."/>
            <person name="Reinhardt R."/>
            <person name="Pohl T.M."/>
            <person name="Eger P."/>
            <person name="Zimmermann W."/>
            <person name="Wedler H."/>
            <person name="Wambutt R."/>
            <person name="Purnelle B."/>
            <person name="Goffeau A."/>
            <person name="Cadieu E."/>
            <person name="Dreano S."/>
            <person name="Gloux S."/>
            <person name="Lelaure V."/>
            <person name="Mottier S."/>
            <person name="Galibert F."/>
            <person name="Aves S.J."/>
            <person name="Xiang Z."/>
            <person name="Hunt C."/>
            <person name="Moore K."/>
            <person name="Hurst S.M."/>
            <person name="Lucas M."/>
            <person name="Rochet M."/>
            <person name="Gaillardin C."/>
            <person name="Tallada V.A."/>
            <person name="Garzon A."/>
            <person name="Thode G."/>
            <person name="Daga R.R."/>
            <person name="Cruzado L."/>
            <person name="Jimenez J."/>
            <person name="Sanchez M."/>
            <person name="del Rey F."/>
            <person name="Benito J."/>
            <person name="Dominguez A."/>
            <person name="Revuelta J.L."/>
            <person name="Moreno S."/>
            <person name="Armstrong J."/>
            <person name="Forsburg S.L."/>
            <person name="Cerutti L."/>
            <person name="Lowe T."/>
            <person name="McCombie W.R."/>
            <person name="Paulsen I."/>
            <person name="Potashkin J."/>
            <person name="Shpakovski G.V."/>
            <person name="Ussery D."/>
            <person name="Barrell B.G."/>
            <person name="Nurse P."/>
        </authorList>
    </citation>
    <scope>NUCLEOTIDE SEQUENCE [LARGE SCALE GENOMIC DNA]</scope>
    <source>
        <strain>972 / ATCC 24843</strain>
    </source>
</reference>
<reference key="2">
    <citation type="journal article" date="2000" name="Genes Cells">
        <title>Large-scale screening of intracellular protein localization in living fission yeast cells by the use of a GFP-fusion genomic DNA library.</title>
        <authorList>
            <person name="Ding D.-Q."/>
            <person name="Tomita Y."/>
            <person name="Yamamoto A."/>
            <person name="Chikashige Y."/>
            <person name="Haraguchi T."/>
            <person name="Hiraoka Y."/>
        </authorList>
    </citation>
    <scope>NUCLEOTIDE SEQUENCE [LARGE SCALE GENOMIC DNA] OF 1-113</scope>
    <scope>SUBCELLULAR LOCATION</scope>
    <source>
        <strain>ATCC 38364 / 968</strain>
    </source>
</reference>
<feature type="signal peptide" evidence="1">
    <location>
        <begin position="1"/>
        <end position="24"/>
    </location>
</feature>
<feature type="chain" id="PRO_0000014201" description="Uncharacterized protein C1039.02">
    <location>
        <begin position="25"/>
        <end position="601"/>
    </location>
</feature>
<gene>
    <name type="ORF">SPAC1039.02</name>
</gene>
<organism>
    <name type="scientific">Schizosaccharomyces pombe (strain 972 / ATCC 24843)</name>
    <name type="common">Fission yeast</name>
    <dbReference type="NCBI Taxonomy" id="284812"/>
    <lineage>
        <taxon>Eukaryota</taxon>
        <taxon>Fungi</taxon>
        <taxon>Dikarya</taxon>
        <taxon>Ascomycota</taxon>
        <taxon>Taphrinomycotina</taxon>
        <taxon>Schizosaccharomycetes</taxon>
        <taxon>Schizosaccharomycetales</taxon>
        <taxon>Schizosaccharomycetaceae</taxon>
        <taxon>Schizosaccharomyces</taxon>
    </lineage>
</organism>
<protein>
    <recommendedName>
        <fullName>Uncharacterized protein C1039.02</fullName>
    </recommendedName>
</protein>
<sequence length="601" mass="68066">MKLSSLPSGLGLASLLGLISSATAYSATDLTTMYDWNQIIKPLEWGQLNFIHTTDTHGWLGGHLRDARYKADFGEFKSFALRMKELADFKGVDLLMVDTGDLHDGNGLSDASDPQGIYTNNIFTYLPYDILTIGNHELYQAAISNNTHEYFVPHWNGTYLASNVQIYNSSNELEQFGGESTYFITKHGVRTLAMGFLFNFSSNANNTVVTPVETAIKSEWYQQQINRTDVDLFLLIGHIPVRDYDEWKSLHASIRKVHPNTPIQILGGHSHIRDFAVYDEASVSLEGGRYCETVGWLSIDGLSASNATRQYVGRPVTNETRQSYPNLPKPATPLYYTRRYIDFNRQNFRFHTQQSEDSFDTPEGVELSKVIKQYRDDLNLSYVFGCIPKNYYMTEVSPQAEDSIFKLMVDHILPEVLVNENRSSVPHIIISNGGGVRGSMYEGTFGPDEMFQLNPFLTNYYNYIPDVPYKYAKKLYSILNGGSTLRNVNDYLAALNPGYVTSDDFGEDGDDTVHTYVSTYAVPNVLQAQVGFNTTSAPETVDVVFLNYFQTKVLKALNTMVNETIYTLSNVTQYWVREDGKDSSPYMFAQYVQQEWSDYCD</sequence>
<keyword id="KW-0472">Membrane</keyword>
<keyword id="KW-1185">Reference proteome</keyword>
<keyword id="KW-0732">Signal</keyword>
<proteinExistence type="inferred from homology"/>
<name>YFZ2_SCHPO</name>